<feature type="chain" id="PRO_0000301310" description="Phosphoglucosamine mutase">
    <location>
        <begin position="1"/>
        <end position="445"/>
    </location>
</feature>
<feature type="active site" description="Phosphoserine intermediate" evidence="1">
    <location>
        <position position="102"/>
    </location>
</feature>
<feature type="binding site" description="via phosphate group" evidence="1">
    <location>
        <position position="102"/>
    </location>
    <ligand>
        <name>Mg(2+)</name>
        <dbReference type="ChEBI" id="CHEBI:18420"/>
    </ligand>
</feature>
<feature type="binding site" evidence="1">
    <location>
        <position position="241"/>
    </location>
    <ligand>
        <name>Mg(2+)</name>
        <dbReference type="ChEBI" id="CHEBI:18420"/>
    </ligand>
</feature>
<feature type="binding site" evidence="1">
    <location>
        <position position="243"/>
    </location>
    <ligand>
        <name>Mg(2+)</name>
        <dbReference type="ChEBI" id="CHEBI:18420"/>
    </ligand>
</feature>
<feature type="binding site" evidence="1">
    <location>
        <position position="245"/>
    </location>
    <ligand>
        <name>Mg(2+)</name>
        <dbReference type="ChEBI" id="CHEBI:18420"/>
    </ligand>
</feature>
<feature type="modified residue" description="Phosphoserine" evidence="1">
    <location>
        <position position="102"/>
    </location>
</feature>
<keyword id="KW-0413">Isomerase</keyword>
<keyword id="KW-0460">Magnesium</keyword>
<keyword id="KW-0479">Metal-binding</keyword>
<keyword id="KW-0597">Phosphoprotein</keyword>
<sequence>MSNRKYFGTDGIRGRVGDAPITPDFVLKLGWAAGKVLARHGSRKIIIGKDTRISGYMLESALEAGLAAAGLSALFTGPMPTPAVAYLTRTFRAEAGIVISASHNPFYDNGIKFFSIDGTKLPDAVEEAIEAEMEKEISCVDSAELGKASRIVDAAGRYIEFCKATFPNELSLSELKIVVDCANGATYHIAPNVLRELGANVIAIGCEPNGVNINAEVGATDVRALQARVLAEKADLGIAFDGDGDRVIMVDHEGNKVDGDQIMYIIAREGLRQGQLRGGAVGTLMSNMGLELALKQLGIPFARAKVGDRYVLEKMQEKGWRIGAENSGHVILLDKTTTGDGIVAGLQVLAAMARNHMSLHDLCSGMKMFPQILVNVRYTAGSGDPLEHESVKAVTAEVEAALGSRGRVLLRKSGTEPLIRVMVEGEDEAQVTEFAHRIADAVKAV</sequence>
<reference key="1">
    <citation type="journal article" date="2006" name="Proc. Natl. Acad. Sci. U.S.A.">
        <title>Identification of genes subject to positive selection in uropathogenic strains of Escherichia coli: a comparative genomics approach.</title>
        <authorList>
            <person name="Chen S.L."/>
            <person name="Hung C.-S."/>
            <person name="Xu J."/>
            <person name="Reigstad C.S."/>
            <person name="Magrini V."/>
            <person name="Sabo A."/>
            <person name="Blasiar D."/>
            <person name="Bieri T."/>
            <person name="Meyer R.R."/>
            <person name="Ozersky P."/>
            <person name="Armstrong J.R."/>
            <person name="Fulton R.S."/>
            <person name="Latreille J.P."/>
            <person name="Spieth J."/>
            <person name="Hooton T.M."/>
            <person name="Mardis E.R."/>
            <person name="Hultgren S.J."/>
            <person name="Gordon J.I."/>
        </authorList>
    </citation>
    <scope>NUCLEOTIDE SEQUENCE [LARGE SCALE GENOMIC DNA]</scope>
    <source>
        <strain>UTI89 / UPEC</strain>
    </source>
</reference>
<protein>
    <recommendedName>
        <fullName evidence="1">Phosphoglucosamine mutase</fullName>
        <ecNumber evidence="1">5.4.2.10</ecNumber>
    </recommendedName>
</protein>
<organism>
    <name type="scientific">Escherichia coli (strain UTI89 / UPEC)</name>
    <dbReference type="NCBI Taxonomy" id="364106"/>
    <lineage>
        <taxon>Bacteria</taxon>
        <taxon>Pseudomonadati</taxon>
        <taxon>Pseudomonadota</taxon>
        <taxon>Gammaproteobacteria</taxon>
        <taxon>Enterobacterales</taxon>
        <taxon>Enterobacteriaceae</taxon>
        <taxon>Escherichia</taxon>
    </lineage>
</organism>
<comment type="function">
    <text evidence="1">Catalyzes the conversion of glucosamine-6-phosphate to glucosamine-1-phosphate.</text>
</comment>
<comment type="catalytic activity">
    <reaction evidence="1">
        <text>alpha-D-glucosamine 1-phosphate = D-glucosamine 6-phosphate</text>
        <dbReference type="Rhea" id="RHEA:23424"/>
        <dbReference type="ChEBI" id="CHEBI:58516"/>
        <dbReference type="ChEBI" id="CHEBI:58725"/>
        <dbReference type="EC" id="5.4.2.10"/>
    </reaction>
</comment>
<comment type="cofactor">
    <cofactor evidence="1">
        <name>Mg(2+)</name>
        <dbReference type="ChEBI" id="CHEBI:18420"/>
    </cofactor>
    <text evidence="1">Binds 1 Mg(2+) ion per subunit.</text>
</comment>
<comment type="PTM">
    <text evidence="1">Activated by phosphorylation.</text>
</comment>
<comment type="similarity">
    <text evidence="1">Belongs to the phosphohexose mutase family.</text>
</comment>
<evidence type="ECO:0000255" key="1">
    <source>
        <dbReference type="HAMAP-Rule" id="MF_01554"/>
    </source>
</evidence>
<gene>
    <name evidence="1" type="primary">glmM</name>
    <name type="ordered locus">UTI89_C3608</name>
</gene>
<dbReference type="EC" id="5.4.2.10" evidence="1"/>
<dbReference type="EMBL" id="CP000243">
    <property type="protein sequence ID" value="ABE09052.1"/>
    <property type="molecule type" value="Genomic_DNA"/>
</dbReference>
<dbReference type="RefSeq" id="WP_000071137.1">
    <property type="nucleotide sequence ID" value="NZ_CP064825.1"/>
</dbReference>
<dbReference type="SMR" id="Q1R6G2"/>
<dbReference type="GeneID" id="93778805"/>
<dbReference type="KEGG" id="eci:UTI89_C3608"/>
<dbReference type="HOGENOM" id="CLU_016950_7_0_6"/>
<dbReference type="Proteomes" id="UP000001952">
    <property type="component" value="Chromosome"/>
</dbReference>
<dbReference type="GO" id="GO:0005829">
    <property type="term" value="C:cytosol"/>
    <property type="evidence" value="ECO:0007669"/>
    <property type="project" value="TreeGrafter"/>
</dbReference>
<dbReference type="GO" id="GO:0000287">
    <property type="term" value="F:magnesium ion binding"/>
    <property type="evidence" value="ECO:0007669"/>
    <property type="project" value="UniProtKB-UniRule"/>
</dbReference>
<dbReference type="GO" id="GO:0008966">
    <property type="term" value="F:phosphoglucosamine mutase activity"/>
    <property type="evidence" value="ECO:0007669"/>
    <property type="project" value="UniProtKB-UniRule"/>
</dbReference>
<dbReference type="GO" id="GO:0004615">
    <property type="term" value="F:phosphomannomutase activity"/>
    <property type="evidence" value="ECO:0007669"/>
    <property type="project" value="TreeGrafter"/>
</dbReference>
<dbReference type="GO" id="GO:0005975">
    <property type="term" value="P:carbohydrate metabolic process"/>
    <property type="evidence" value="ECO:0007669"/>
    <property type="project" value="InterPro"/>
</dbReference>
<dbReference type="GO" id="GO:0009252">
    <property type="term" value="P:peptidoglycan biosynthetic process"/>
    <property type="evidence" value="ECO:0007669"/>
    <property type="project" value="TreeGrafter"/>
</dbReference>
<dbReference type="GO" id="GO:0006048">
    <property type="term" value="P:UDP-N-acetylglucosamine biosynthetic process"/>
    <property type="evidence" value="ECO:0007669"/>
    <property type="project" value="TreeGrafter"/>
</dbReference>
<dbReference type="CDD" id="cd05802">
    <property type="entry name" value="GlmM"/>
    <property type="match status" value="1"/>
</dbReference>
<dbReference type="FunFam" id="3.30.310.50:FF:000001">
    <property type="entry name" value="Phosphoglucosamine mutase"/>
    <property type="match status" value="1"/>
</dbReference>
<dbReference type="FunFam" id="3.40.120.10:FF:000001">
    <property type="entry name" value="Phosphoglucosamine mutase"/>
    <property type="match status" value="1"/>
</dbReference>
<dbReference type="FunFam" id="3.40.120.10:FF:000002">
    <property type="entry name" value="Phosphoglucosamine mutase"/>
    <property type="match status" value="1"/>
</dbReference>
<dbReference type="Gene3D" id="3.40.120.10">
    <property type="entry name" value="Alpha-D-Glucose-1,6-Bisphosphate, subunit A, domain 3"/>
    <property type="match status" value="3"/>
</dbReference>
<dbReference type="Gene3D" id="3.30.310.50">
    <property type="entry name" value="Alpha-D-phosphohexomutase, C-terminal domain"/>
    <property type="match status" value="1"/>
</dbReference>
<dbReference type="HAMAP" id="MF_01554_B">
    <property type="entry name" value="GlmM_B"/>
    <property type="match status" value="1"/>
</dbReference>
<dbReference type="InterPro" id="IPR005844">
    <property type="entry name" value="A-D-PHexomutase_a/b/a-I"/>
</dbReference>
<dbReference type="InterPro" id="IPR016055">
    <property type="entry name" value="A-D-PHexomutase_a/b/a-I/II/III"/>
</dbReference>
<dbReference type="InterPro" id="IPR005845">
    <property type="entry name" value="A-D-PHexomutase_a/b/a-II"/>
</dbReference>
<dbReference type="InterPro" id="IPR005846">
    <property type="entry name" value="A-D-PHexomutase_a/b/a-III"/>
</dbReference>
<dbReference type="InterPro" id="IPR005843">
    <property type="entry name" value="A-D-PHexomutase_C"/>
</dbReference>
<dbReference type="InterPro" id="IPR036900">
    <property type="entry name" value="A-D-PHexomutase_C_sf"/>
</dbReference>
<dbReference type="InterPro" id="IPR016066">
    <property type="entry name" value="A-D-PHexomutase_CS"/>
</dbReference>
<dbReference type="InterPro" id="IPR005841">
    <property type="entry name" value="Alpha-D-phosphohexomutase_SF"/>
</dbReference>
<dbReference type="InterPro" id="IPR006352">
    <property type="entry name" value="GlmM_bact"/>
</dbReference>
<dbReference type="InterPro" id="IPR050060">
    <property type="entry name" value="Phosphoglucosamine_mutase"/>
</dbReference>
<dbReference type="NCBIfam" id="TIGR01455">
    <property type="entry name" value="glmM"/>
    <property type="match status" value="1"/>
</dbReference>
<dbReference type="NCBIfam" id="NF008139">
    <property type="entry name" value="PRK10887.1"/>
    <property type="match status" value="1"/>
</dbReference>
<dbReference type="PANTHER" id="PTHR42946:SF1">
    <property type="entry name" value="PHOSPHOGLUCOMUTASE (ALPHA-D-GLUCOSE-1,6-BISPHOSPHATE-DEPENDENT)"/>
    <property type="match status" value="1"/>
</dbReference>
<dbReference type="PANTHER" id="PTHR42946">
    <property type="entry name" value="PHOSPHOHEXOSE MUTASE"/>
    <property type="match status" value="1"/>
</dbReference>
<dbReference type="Pfam" id="PF02878">
    <property type="entry name" value="PGM_PMM_I"/>
    <property type="match status" value="1"/>
</dbReference>
<dbReference type="Pfam" id="PF02879">
    <property type="entry name" value="PGM_PMM_II"/>
    <property type="match status" value="1"/>
</dbReference>
<dbReference type="Pfam" id="PF02880">
    <property type="entry name" value="PGM_PMM_III"/>
    <property type="match status" value="1"/>
</dbReference>
<dbReference type="Pfam" id="PF00408">
    <property type="entry name" value="PGM_PMM_IV"/>
    <property type="match status" value="1"/>
</dbReference>
<dbReference type="PRINTS" id="PR00509">
    <property type="entry name" value="PGMPMM"/>
</dbReference>
<dbReference type="SUPFAM" id="SSF55957">
    <property type="entry name" value="Phosphoglucomutase, C-terminal domain"/>
    <property type="match status" value="1"/>
</dbReference>
<dbReference type="SUPFAM" id="SSF53738">
    <property type="entry name" value="Phosphoglucomutase, first 3 domains"/>
    <property type="match status" value="3"/>
</dbReference>
<dbReference type="PROSITE" id="PS00710">
    <property type="entry name" value="PGM_PMM"/>
    <property type="match status" value="1"/>
</dbReference>
<name>GLMM_ECOUT</name>
<proteinExistence type="inferred from homology"/>
<accession>Q1R6G2</accession>